<dbReference type="EC" id="5.3.1.24" evidence="1"/>
<dbReference type="EMBL" id="CP000492">
    <property type="protein sequence ID" value="ABL64968.1"/>
    <property type="molecule type" value="Genomic_DNA"/>
</dbReference>
<dbReference type="RefSeq" id="WP_011744795.1">
    <property type="nucleotide sequence ID" value="NC_008639.1"/>
</dbReference>
<dbReference type="SMR" id="A1BEZ1"/>
<dbReference type="STRING" id="290317.Cpha266_0920"/>
<dbReference type="KEGG" id="cph:Cpha266_0920"/>
<dbReference type="eggNOG" id="COG0135">
    <property type="taxonomic scope" value="Bacteria"/>
</dbReference>
<dbReference type="HOGENOM" id="CLU_076364_2_0_10"/>
<dbReference type="OrthoDB" id="9786954at2"/>
<dbReference type="UniPathway" id="UPA00035">
    <property type="reaction ID" value="UER00042"/>
</dbReference>
<dbReference type="Proteomes" id="UP000008701">
    <property type="component" value="Chromosome"/>
</dbReference>
<dbReference type="GO" id="GO:0004640">
    <property type="term" value="F:phosphoribosylanthranilate isomerase activity"/>
    <property type="evidence" value="ECO:0007669"/>
    <property type="project" value="UniProtKB-UniRule"/>
</dbReference>
<dbReference type="GO" id="GO:0000162">
    <property type="term" value="P:L-tryptophan biosynthetic process"/>
    <property type="evidence" value="ECO:0007669"/>
    <property type="project" value="UniProtKB-UniRule"/>
</dbReference>
<dbReference type="CDD" id="cd00405">
    <property type="entry name" value="PRAI"/>
    <property type="match status" value="1"/>
</dbReference>
<dbReference type="Gene3D" id="3.20.20.70">
    <property type="entry name" value="Aldolase class I"/>
    <property type="match status" value="1"/>
</dbReference>
<dbReference type="HAMAP" id="MF_00135">
    <property type="entry name" value="PRAI"/>
    <property type="match status" value="1"/>
</dbReference>
<dbReference type="InterPro" id="IPR013785">
    <property type="entry name" value="Aldolase_TIM"/>
</dbReference>
<dbReference type="InterPro" id="IPR001240">
    <property type="entry name" value="PRAI_dom"/>
</dbReference>
<dbReference type="InterPro" id="IPR011060">
    <property type="entry name" value="RibuloseP-bd_barrel"/>
</dbReference>
<dbReference type="InterPro" id="IPR044643">
    <property type="entry name" value="TrpF_fam"/>
</dbReference>
<dbReference type="PANTHER" id="PTHR42894">
    <property type="entry name" value="N-(5'-PHOSPHORIBOSYL)ANTHRANILATE ISOMERASE"/>
    <property type="match status" value="1"/>
</dbReference>
<dbReference type="PANTHER" id="PTHR42894:SF1">
    <property type="entry name" value="N-(5'-PHOSPHORIBOSYL)ANTHRANILATE ISOMERASE"/>
    <property type="match status" value="1"/>
</dbReference>
<dbReference type="Pfam" id="PF00697">
    <property type="entry name" value="PRAI"/>
    <property type="match status" value="1"/>
</dbReference>
<dbReference type="SUPFAM" id="SSF51366">
    <property type="entry name" value="Ribulose-phoshate binding barrel"/>
    <property type="match status" value="1"/>
</dbReference>
<sequence length="215" mass="23256">MVKIKICGITRLSDALDACFAGADALGFNFSSKSPRAIAPERAKEIIEKLPPFVESTGIFVDQSPEEINALCQYCRLQIAQLHSEQYSPEQARSITAAKVIKVFRPEENFAVEEVFAFAQNSGINAFLFDAYRPGMAGGTGETIEASLATRIFNELGNSCYAILAGGLNATNVGEAIRRIQPYGVDTASGVESRPGIKDSREIRSFVKAVHHGGH</sequence>
<comment type="catalytic activity">
    <reaction evidence="1">
        <text>N-(5-phospho-beta-D-ribosyl)anthranilate = 1-(2-carboxyphenylamino)-1-deoxy-D-ribulose 5-phosphate</text>
        <dbReference type="Rhea" id="RHEA:21540"/>
        <dbReference type="ChEBI" id="CHEBI:18277"/>
        <dbReference type="ChEBI" id="CHEBI:58613"/>
        <dbReference type="EC" id="5.3.1.24"/>
    </reaction>
</comment>
<comment type="pathway">
    <text evidence="1">Amino-acid biosynthesis; L-tryptophan biosynthesis; L-tryptophan from chorismate: step 3/5.</text>
</comment>
<comment type="similarity">
    <text evidence="1">Belongs to the TrpF family.</text>
</comment>
<reference key="1">
    <citation type="submission" date="2006-12" db="EMBL/GenBank/DDBJ databases">
        <title>Complete sequence of Chlorobium phaeobacteroides DSM 266.</title>
        <authorList>
            <consortium name="US DOE Joint Genome Institute"/>
            <person name="Copeland A."/>
            <person name="Lucas S."/>
            <person name="Lapidus A."/>
            <person name="Barry K."/>
            <person name="Detter J.C."/>
            <person name="Glavina del Rio T."/>
            <person name="Hammon N."/>
            <person name="Israni S."/>
            <person name="Pitluck S."/>
            <person name="Goltsman E."/>
            <person name="Schmutz J."/>
            <person name="Larimer F."/>
            <person name="Land M."/>
            <person name="Hauser L."/>
            <person name="Mikhailova N."/>
            <person name="Li T."/>
            <person name="Overmann J."/>
            <person name="Bryant D.A."/>
            <person name="Richardson P."/>
        </authorList>
    </citation>
    <scope>NUCLEOTIDE SEQUENCE [LARGE SCALE GENOMIC DNA]</scope>
    <source>
        <strain>DSM 266 / SMG 266 / 2430</strain>
    </source>
</reference>
<proteinExistence type="inferred from homology"/>
<accession>A1BEZ1</accession>
<protein>
    <recommendedName>
        <fullName evidence="1">N-(5'-phosphoribosyl)anthranilate isomerase</fullName>
        <shortName evidence="1">PRAI</shortName>
        <ecNumber evidence="1">5.3.1.24</ecNumber>
    </recommendedName>
</protein>
<feature type="chain" id="PRO_1000018588" description="N-(5'-phosphoribosyl)anthranilate isomerase">
    <location>
        <begin position="1"/>
        <end position="215"/>
    </location>
</feature>
<keyword id="KW-0028">Amino-acid biosynthesis</keyword>
<keyword id="KW-0057">Aromatic amino acid biosynthesis</keyword>
<keyword id="KW-0413">Isomerase</keyword>
<keyword id="KW-1185">Reference proteome</keyword>
<keyword id="KW-0822">Tryptophan biosynthesis</keyword>
<name>TRPF_CHLPD</name>
<organism>
    <name type="scientific">Chlorobium phaeobacteroides (strain DSM 266 / SMG 266 / 2430)</name>
    <dbReference type="NCBI Taxonomy" id="290317"/>
    <lineage>
        <taxon>Bacteria</taxon>
        <taxon>Pseudomonadati</taxon>
        <taxon>Chlorobiota</taxon>
        <taxon>Chlorobiia</taxon>
        <taxon>Chlorobiales</taxon>
        <taxon>Chlorobiaceae</taxon>
        <taxon>Chlorobium/Pelodictyon group</taxon>
        <taxon>Chlorobium</taxon>
    </lineage>
</organism>
<evidence type="ECO:0000255" key="1">
    <source>
        <dbReference type="HAMAP-Rule" id="MF_00135"/>
    </source>
</evidence>
<gene>
    <name evidence="1" type="primary">trpF</name>
    <name type="ordered locus">Cpha266_0920</name>
</gene>